<reference key="1">
    <citation type="journal article" date="1996" name="Aust. J. Chem.">
        <title>The structure of new peptides from the Australin red tree frog 'Litoria rubella'. The skin peptide profile as a probe for the study of evolutionary trends of amphibians.</title>
        <authorList>
            <person name="Steinborner S.T."/>
            <person name="Wabnitz P.A."/>
            <person name="Waugh R.J."/>
            <person name="Bowie J.H."/>
            <person name="Gao C."/>
            <person name="Tyler M.J."/>
            <person name="Wallace J.C."/>
        </authorList>
    </citation>
    <scope>PROTEIN SEQUENCE</scope>
    <scope>AMIDATION AT THR-5</scope>
    <scope>MASS SPECTROMETRY</scope>
    <source>
        <tissue>Skin secretion</tissue>
    </source>
</reference>
<comment type="function">
    <text>Shows neither neuropeptide activity nor antibiotic activity.</text>
</comment>
<comment type="subcellular location">
    <subcellularLocation>
        <location>Secreted</location>
    </subcellularLocation>
</comment>
<comment type="tissue specificity">
    <text>Expressed by the skin dorsal glands.</text>
</comment>
<comment type="mass spectrometry" mass="655.0" method="FAB" evidence="1"/>
<sequence length="5" mass="656">IEFFT</sequence>
<name>RBE31_LITRU</name>
<protein>
    <recommendedName>
        <fullName>Rubellidin-3.1</fullName>
    </recommendedName>
</protein>
<feature type="peptide" id="PRO_0000043834" description="Rubellidin-3.1">
    <location>
        <begin position="1"/>
        <end position="5"/>
    </location>
</feature>
<feature type="modified residue" description="Threonine amide" evidence="1">
    <location>
        <position position="5"/>
    </location>
</feature>
<organism>
    <name type="scientific">Litoria rubella</name>
    <name type="common">Desert tree frog</name>
    <name type="synonym">Hyla rubella</name>
    <dbReference type="NCBI Taxonomy" id="104895"/>
    <lineage>
        <taxon>Eukaryota</taxon>
        <taxon>Metazoa</taxon>
        <taxon>Chordata</taxon>
        <taxon>Craniata</taxon>
        <taxon>Vertebrata</taxon>
        <taxon>Euteleostomi</taxon>
        <taxon>Amphibia</taxon>
        <taxon>Batrachia</taxon>
        <taxon>Anura</taxon>
        <taxon>Neobatrachia</taxon>
        <taxon>Hyloidea</taxon>
        <taxon>Hylidae</taxon>
        <taxon>Pelodryadinae</taxon>
        <taxon>Litoria</taxon>
    </lineage>
</organism>
<evidence type="ECO:0000269" key="1">
    <source ref="1"/>
</evidence>
<accession>P82072</accession>
<proteinExistence type="evidence at protein level"/>
<dbReference type="GO" id="GO:0005576">
    <property type="term" value="C:extracellular region"/>
    <property type="evidence" value="ECO:0007669"/>
    <property type="project" value="UniProtKB-SubCell"/>
</dbReference>
<dbReference type="GO" id="GO:0006952">
    <property type="term" value="P:defense response"/>
    <property type="evidence" value="ECO:0007669"/>
    <property type="project" value="UniProtKB-KW"/>
</dbReference>
<keyword id="KW-0027">Amidation</keyword>
<keyword id="KW-0878">Amphibian defense peptide</keyword>
<keyword id="KW-0903">Direct protein sequencing</keyword>
<keyword id="KW-0964">Secreted</keyword>